<protein>
    <recommendedName>
        <fullName evidence="1">Threonine--tRNA ligase</fullName>
        <ecNumber evidence="1">6.1.1.3</ecNumber>
    </recommendedName>
    <alternativeName>
        <fullName evidence="1">Threonyl-tRNA synthetase</fullName>
        <shortName evidence="1">ThrRS</shortName>
    </alternativeName>
</protein>
<evidence type="ECO:0000255" key="1">
    <source>
        <dbReference type="HAMAP-Rule" id="MF_00184"/>
    </source>
</evidence>
<gene>
    <name evidence="1" type="primary">thrS</name>
    <name type="ordered locus">Ccur92_00800</name>
    <name type="ORF">CCV52592_0330</name>
</gene>
<dbReference type="EC" id="6.1.1.3" evidence="1"/>
<dbReference type="EMBL" id="CP000767">
    <property type="protein sequence ID" value="EAT99702.1"/>
    <property type="molecule type" value="Genomic_DNA"/>
</dbReference>
<dbReference type="RefSeq" id="WP_011991667.1">
    <property type="nucleotide sequence ID" value="NC_009715.2"/>
</dbReference>
<dbReference type="SMR" id="A7GVZ2"/>
<dbReference type="STRING" id="360105.CCV52592_0330"/>
<dbReference type="KEGG" id="ccv:CCV52592_0330"/>
<dbReference type="HOGENOM" id="CLU_008554_0_1_7"/>
<dbReference type="OrthoDB" id="9802304at2"/>
<dbReference type="Proteomes" id="UP000006380">
    <property type="component" value="Chromosome"/>
</dbReference>
<dbReference type="GO" id="GO:0005829">
    <property type="term" value="C:cytosol"/>
    <property type="evidence" value="ECO:0007669"/>
    <property type="project" value="TreeGrafter"/>
</dbReference>
<dbReference type="GO" id="GO:0005524">
    <property type="term" value="F:ATP binding"/>
    <property type="evidence" value="ECO:0007669"/>
    <property type="project" value="UniProtKB-UniRule"/>
</dbReference>
<dbReference type="GO" id="GO:0046872">
    <property type="term" value="F:metal ion binding"/>
    <property type="evidence" value="ECO:0007669"/>
    <property type="project" value="UniProtKB-KW"/>
</dbReference>
<dbReference type="GO" id="GO:0004829">
    <property type="term" value="F:threonine-tRNA ligase activity"/>
    <property type="evidence" value="ECO:0007669"/>
    <property type="project" value="UniProtKB-UniRule"/>
</dbReference>
<dbReference type="GO" id="GO:0000049">
    <property type="term" value="F:tRNA binding"/>
    <property type="evidence" value="ECO:0007669"/>
    <property type="project" value="UniProtKB-KW"/>
</dbReference>
<dbReference type="GO" id="GO:0006435">
    <property type="term" value="P:threonyl-tRNA aminoacylation"/>
    <property type="evidence" value="ECO:0007669"/>
    <property type="project" value="UniProtKB-UniRule"/>
</dbReference>
<dbReference type="CDD" id="cd00860">
    <property type="entry name" value="ThrRS_anticodon"/>
    <property type="match status" value="1"/>
</dbReference>
<dbReference type="CDD" id="cd00771">
    <property type="entry name" value="ThrRS_core"/>
    <property type="match status" value="1"/>
</dbReference>
<dbReference type="FunFam" id="3.30.930.10:FF:000019">
    <property type="entry name" value="Threonine--tRNA ligase"/>
    <property type="match status" value="1"/>
</dbReference>
<dbReference type="FunFam" id="3.40.50.800:FF:000001">
    <property type="entry name" value="Threonine--tRNA ligase"/>
    <property type="match status" value="1"/>
</dbReference>
<dbReference type="FunFam" id="3.30.980.10:FF:000005">
    <property type="entry name" value="Threonyl-tRNA synthetase, mitochondrial"/>
    <property type="match status" value="1"/>
</dbReference>
<dbReference type="Gene3D" id="3.30.54.20">
    <property type="match status" value="1"/>
</dbReference>
<dbReference type="Gene3D" id="3.40.50.800">
    <property type="entry name" value="Anticodon-binding domain"/>
    <property type="match status" value="1"/>
</dbReference>
<dbReference type="Gene3D" id="3.30.930.10">
    <property type="entry name" value="Bira Bifunctional Protein, Domain 2"/>
    <property type="match status" value="1"/>
</dbReference>
<dbReference type="Gene3D" id="3.30.980.10">
    <property type="entry name" value="Threonyl-trna Synthetase, Chain A, domain 2"/>
    <property type="match status" value="1"/>
</dbReference>
<dbReference type="HAMAP" id="MF_00184">
    <property type="entry name" value="Thr_tRNA_synth"/>
    <property type="match status" value="1"/>
</dbReference>
<dbReference type="InterPro" id="IPR002314">
    <property type="entry name" value="aa-tRNA-synt_IIb"/>
</dbReference>
<dbReference type="InterPro" id="IPR006195">
    <property type="entry name" value="aa-tRNA-synth_II"/>
</dbReference>
<dbReference type="InterPro" id="IPR045864">
    <property type="entry name" value="aa-tRNA-synth_II/BPL/LPL"/>
</dbReference>
<dbReference type="InterPro" id="IPR004154">
    <property type="entry name" value="Anticodon-bd"/>
</dbReference>
<dbReference type="InterPro" id="IPR036621">
    <property type="entry name" value="Anticodon-bd_dom_sf"/>
</dbReference>
<dbReference type="InterPro" id="IPR002320">
    <property type="entry name" value="Thr-tRNA-ligase_IIa"/>
</dbReference>
<dbReference type="InterPro" id="IPR018163">
    <property type="entry name" value="Thr/Ala-tRNA-synth_IIc_edit"/>
</dbReference>
<dbReference type="InterPro" id="IPR047246">
    <property type="entry name" value="ThrRS_anticodon"/>
</dbReference>
<dbReference type="InterPro" id="IPR033728">
    <property type="entry name" value="ThrRS_core"/>
</dbReference>
<dbReference type="InterPro" id="IPR012947">
    <property type="entry name" value="tRNA_SAD"/>
</dbReference>
<dbReference type="NCBIfam" id="TIGR00418">
    <property type="entry name" value="thrS"/>
    <property type="match status" value="1"/>
</dbReference>
<dbReference type="PANTHER" id="PTHR11451:SF44">
    <property type="entry name" value="THREONINE--TRNA LIGASE, CHLOROPLASTIC_MITOCHONDRIAL 2"/>
    <property type="match status" value="1"/>
</dbReference>
<dbReference type="PANTHER" id="PTHR11451">
    <property type="entry name" value="THREONINE-TRNA LIGASE"/>
    <property type="match status" value="1"/>
</dbReference>
<dbReference type="Pfam" id="PF03129">
    <property type="entry name" value="HGTP_anticodon"/>
    <property type="match status" value="1"/>
</dbReference>
<dbReference type="Pfam" id="PF00587">
    <property type="entry name" value="tRNA-synt_2b"/>
    <property type="match status" value="1"/>
</dbReference>
<dbReference type="Pfam" id="PF07973">
    <property type="entry name" value="tRNA_SAD"/>
    <property type="match status" value="1"/>
</dbReference>
<dbReference type="PRINTS" id="PR01047">
    <property type="entry name" value="TRNASYNTHTHR"/>
</dbReference>
<dbReference type="SMART" id="SM00863">
    <property type="entry name" value="tRNA_SAD"/>
    <property type="match status" value="1"/>
</dbReference>
<dbReference type="SUPFAM" id="SSF52954">
    <property type="entry name" value="Class II aaRS ABD-related"/>
    <property type="match status" value="1"/>
</dbReference>
<dbReference type="SUPFAM" id="SSF55681">
    <property type="entry name" value="Class II aaRS and biotin synthetases"/>
    <property type="match status" value="1"/>
</dbReference>
<dbReference type="SUPFAM" id="SSF55186">
    <property type="entry name" value="ThrRS/AlaRS common domain"/>
    <property type="match status" value="1"/>
</dbReference>
<dbReference type="PROSITE" id="PS50862">
    <property type="entry name" value="AA_TRNA_LIGASE_II"/>
    <property type="match status" value="1"/>
</dbReference>
<keyword id="KW-0030">Aminoacyl-tRNA synthetase</keyword>
<keyword id="KW-0067">ATP-binding</keyword>
<keyword id="KW-0963">Cytoplasm</keyword>
<keyword id="KW-0436">Ligase</keyword>
<keyword id="KW-0479">Metal-binding</keyword>
<keyword id="KW-0547">Nucleotide-binding</keyword>
<keyword id="KW-0648">Protein biosynthesis</keyword>
<keyword id="KW-1185">Reference proteome</keyword>
<keyword id="KW-0694">RNA-binding</keyword>
<keyword id="KW-0820">tRNA-binding</keyword>
<keyword id="KW-0862">Zinc</keyword>
<name>SYT_CAMC5</name>
<feature type="chain" id="PRO_1000071672" description="Threonine--tRNA ligase">
    <location>
        <begin position="1"/>
        <end position="606"/>
    </location>
</feature>
<feature type="region of interest" description="Catalytic" evidence="1">
    <location>
        <begin position="212"/>
        <end position="503"/>
    </location>
</feature>
<feature type="binding site" evidence="1">
    <location>
        <position position="304"/>
    </location>
    <ligand>
        <name>Zn(2+)</name>
        <dbReference type="ChEBI" id="CHEBI:29105"/>
    </ligand>
</feature>
<feature type="binding site" evidence="1">
    <location>
        <position position="355"/>
    </location>
    <ligand>
        <name>Zn(2+)</name>
        <dbReference type="ChEBI" id="CHEBI:29105"/>
    </ligand>
</feature>
<feature type="binding site" evidence="1">
    <location>
        <position position="480"/>
    </location>
    <ligand>
        <name>Zn(2+)</name>
        <dbReference type="ChEBI" id="CHEBI:29105"/>
    </ligand>
</feature>
<accession>A7GVZ2</accession>
<proteinExistence type="inferred from homology"/>
<sequence>MSEIIAYKLNGELIDTQSINGREAVAQPVYFDNSPDALHVIRHSCAHLMAQAIKSLYPNAKFFVGPNVEDGFYYDFRVDEAGTKLGESDLEAIEKKMKELAEAKFEITKICSTKAAMSEKFKNDDLKQEVLKRIPEGEVSSYAQGDFEDLCRGPHVPNTKFLRFFKLTRVAGAYLGGDETREMLNRIYGTAYADKASLAEHIRIIEEAKKRDHRKLGVEMKLFGFDEEVGGGLPIWLPNGGRLRSKLEQILYKAHRDRGYEPVRGPELLKADVWKRSGHYANYKENMYFTTIDDAEYGIKPMNCVGHIKVYQTEIRSYRDLPLKFFEYGVVHRHEKSGVLHGLFRVREFAQDDSHIFCMPSQIKQNILEILSFAGKIMQNFGFEYEMEISTKPAKAIGSDEIWDIATNALKEALDENGFKYGIDEGGGAFYGPKIDIKITDALKRKWQCGTIQVDFNLPERFDLGYIDANNERQRPVMLHRALLGSFERFIGILIEHTAGELPFFIAPTQVVIVPISDAHLDYAKEIARELRKFNIDSEVASKNESLNKRIRTAEKQRVPMIIVLGDNEVANRSVALRDRQARTQSDMSLAEFLNLTKEKLSEVHF</sequence>
<reference key="1">
    <citation type="submission" date="2007-07" db="EMBL/GenBank/DDBJ databases">
        <title>Genome sequence of Campylobacter curvus 525.92 isolated from human feces.</title>
        <authorList>
            <person name="Fouts D.E."/>
            <person name="Mongodin E.F."/>
            <person name="Puiu D."/>
            <person name="Sebastian Y."/>
            <person name="Miller W.G."/>
            <person name="Mandrell R.E."/>
            <person name="Lastovica A.J."/>
            <person name="Nelson K.E."/>
        </authorList>
    </citation>
    <scope>NUCLEOTIDE SEQUENCE [LARGE SCALE GENOMIC DNA]</scope>
    <source>
        <strain>525.92</strain>
    </source>
</reference>
<comment type="function">
    <text evidence="1">Catalyzes the attachment of threonine to tRNA(Thr) in a two-step reaction: L-threonine is first activated by ATP to form Thr-AMP and then transferred to the acceptor end of tRNA(Thr). Also edits incorrectly charged L-seryl-tRNA(Thr).</text>
</comment>
<comment type="catalytic activity">
    <reaction evidence="1">
        <text>tRNA(Thr) + L-threonine + ATP = L-threonyl-tRNA(Thr) + AMP + diphosphate + H(+)</text>
        <dbReference type="Rhea" id="RHEA:24624"/>
        <dbReference type="Rhea" id="RHEA-COMP:9670"/>
        <dbReference type="Rhea" id="RHEA-COMP:9704"/>
        <dbReference type="ChEBI" id="CHEBI:15378"/>
        <dbReference type="ChEBI" id="CHEBI:30616"/>
        <dbReference type="ChEBI" id="CHEBI:33019"/>
        <dbReference type="ChEBI" id="CHEBI:57926"/>
        <dbReference type="ChEBI" id="CHEBI:78442"/>
        <dbReference type="ChEBI" id="CHEBI:78534"/>
        <dbReference type="ChEBI" id="CHEBI:456215"/>
        <dbReference type="EC" id="6.1.1.3"/>
    </reaction>
</comment>
<comment type="cofactor">
    <cofactor evidence="1">
        <name>Zn(2+)</name>
        <dbReference type="ChEBI" id="CHEBI:29105"/>
    </cofactor>
    <text evidence="1">Binds 1 zinc ion per subunit.</text>
</comment>
<comment type="subunit">
    <text evidence="1">Homodimer.</text>
</comment>
<comment type="subcellular location">
    <subcellularLocation>
        <location evidence="1">Cytoplasm</location>
    </subcellularLocation>
</comment>
<comment type="similarity">
    <text evidence="1">Belongs to the class-II aminoacyl-tRNA synthetase family.</text>
</comment>
<organism>
    <name type="scientific">Campylobacter curvus (strain 525.92)</name>
    <dbReference type="NCBI Taxonomy" id="360105"/>
    <lineage>
        <taxon>Bacteria</taxon>
        <taxon>Pseudomonadati</taxon>
        <taxon>Campylobacterota</taxon>
        <taxon>Epsilonproteobacteria</taxon>
        <taxon>Campylobacterales</taxon>
        <taxon>Campylobacteraceae</taxon>
        <taxon>Campylobacter</taxon>
    </lineage>
</organism>